<feature type="chain" id="PRO_0000448865" description="Prenyltransferase phqJ">
    <location>
        <begin position="1"/>
        <end position="406"/>
    </location>
</feature>
<feature type="region of interest" description="Disordered" evidence="2">
    <location>
        <begin position="1"/>
        <end position="23"/>
    </location>
</feature>
<feature type="compositionally biased region" description="Polar residues" evidence="2">
    <location>
        <begin position="1"/>
        <end position="19"/>
    </location>
</feature>
<feature type="binding site" evidence="1">
    <location>
        <position position="99"/>
    </location>
    <ligand>
        <name>brevianamide F</name>
        <dbReference type="ChEBI" id="CHEBI:64530"/>
    </ligand>
</feature>
<feature type="binding site" evidence="1">
    <location>
        <position position="113"/>
    </location>
    <ligand>
        <name>dimethylallyl diphosphate</name>
        <dbReference type="ChEBI" id="CHEBI:57623"/>
    </ligand>
</feature>
<feature type="binding site" evidence="1">
    <location>
        <position position="200"/>
    </location>
    <ligand>
        <name>dimethylallyl diphosphate</name>
        <dbReference type="ChEBI" id="CHEBI:57623"/>
    </ligand>
</feature>
<feature type="binding site" evidence="1">
    <location>
        <position position="202"/>
    </location>
    <ligand>
        <name>dimethylallyl diphosphate</name>
        <dbReference type="ChEBI" id="CHEBI:57623"/>
    </ligand>
</feature>
<feature type="binding site" evidence="1">
    <location>
        <position position="204"/>
    </location>
    <ligand>
        <name>brevianamide F</name>
        <dbReference type="ChEBI" id="CHEBI:64530"/>
    </ligand>
</feature>
<feature type="binding site" evidence="1">
    <location>
        <position position="269"/>
    </location>
    <ligand>
        <name>dimethylallyl diphosphate</name>
        <dbReference type="ChEBI" id="CHEBI:57623"/>
    </ligand>
</feature>
<feature type="binding site" evidence="1">
    <location>
        <position position="271"/>
    </location>
    <ligand>
        <name>dimethylallyl diphosphate</name>
        <dbReference type="ChEBI" id="CHEBI:57623"/>
    </ligand>
</feature>
<feature type="binding site" evidence="1">
    <location>
        <position position="340"/>
    </location>
    <ligand>
        <name>dimethylallyl diphosphate</name>
        <dbReference type="ChEBI" id="CHEBI:57623"/>
    </ligand>
</feature>
<feature type="site" description="Required for regioselectivity" evidence="1">
    <location>
        <position position="115"/>
    </location>
</feature>
<gene>
    <name evidence="5" type="primary">phqJ</name>
</gene>
<organism>
    <name type="scientific">Penicillium fellutanum</name>
    <dbReference type="NCBI Taxonomy" id="70095"/>
    <lineage>
        <taxon>Eukaryota</taxon>
        <taxon>Fungi</taxon>
        <taxon>Dikarya</taxon>
        <taxon>Ascomycota</taxon>
        <taxon>Pezizomycotina</taxon>
        <taxon>Eurotiomycetes</taxon>
        <taxon>Eurotiomycetidae</taxon>
        <taxon>Eurotiales</taxon>
        <taxon>Aspergillaceae</taxon>
        <taxon>Penicillium</taxon>
    </lineage>
</organism>
<evidence type="ECO:0000250" key="1">
    <source>
        <dbReference type="UniProtKB" id="Q4WAW7"/>
    </source>
</evidence>
<evidence type="ECO:0000256" key="2">
    <source>
        <dbReference type="SAM" id="MobiDB-lite"/>
    </source>
</evidence>
<evidence type="ECO:0000269" key="3">
    <source>
    </source>
</evidence>
<evidence type="ECO:0000269" key="4">
    <source>
    </source>
</evidence>
<evidence type="ECO:0000303" key="5">
    <source>
    </source>
</evidence>
<evidence type="ECO:0000305" key="6"/>
<evidence type="ECO:0000305" key="7">
    <source>
    </source>
</evidence>
<comment type="function">
    <text evidence="3 4 7">Prenyltransferase; part of the gene cluster that mediates the biosynthesis of paraherquamide, a fungal indole alkaloid that belongs to a family of natural products containing a characteristic bicyclo[2.2.2]diazaoctane core (PubMed:23213353). The first steps in the biosynthesis of paraherquamide is the production of the beta-methyl-proline precursor from L-isoleucine (Probable). They require oxidation of a terminally hydroxylated L-isoleucine to the corresponding aldehyde by enzymes which have still to be identified (Probable). Spontaneous cyclization and dehydration would yield the 4-methyl pyrolline-5-carboxylic acid, which is then reduced by the pyrroline-5-carboxylate reductase phqD leading to the beta-methyl-proline precursor (Probable). The next step of paraherquamide biosynthesis involves coupling of beta-methyl-proline and L-tryptophan by the bimodular NRPS phqB, to produce a monooxopiperazine intermediate (Probable). The reductase (R) domain of phqB utilizes NADPH for hydride transfer to reduce the thioester bond of the T domain-tethered linear dipeptide to a hemithioaminal intermediate, which spontaneously cleaves the C-S bond to release the aldehyde product (PubMed:31548667). This compound undergoes spontaneous cyclization and dehydration to give a dienamine which is reverse prenylated at C-2 by the reverse prenyltransferase phqJ (Probable). The other prenyltransferase present in the cluster, phqI may be a redundant gene in the pathway (Probable). During biosynthetic assembly, the key step to produce the polycyclic core is catalyzed by the bifunctional reductase and intramolecular [4+2] Diels-Alderase, phqE, resulting in formation of the [2.2.2] diazaoctane intermediate preparaherquamide (PubMed:31548667). Following formation of preparaherquamide, an indole 2,3-epoxidation-initiated pinacol-like rearrangement is catalyzed by the phqK FAD-dependent monooxygenase (Probable). The prenyltransferase phqA, the cytochrome P450 monooxygenase phqL, and the FAD-linked oxidoreductase phqH (or the cytochrome P450 monooxygenase phqM), are proposed to be involved in the formation of the pyran ring (Probable). The FAD-dependent monooxygenase phqK is likely responsible for generation of the spiro-oxindole, and the N-methylation is likely mediated by the phqN methyltransferase leading to the isolable natural product paraherquamide F (Probable). However, the order of these biosynthetic steps has still to be determined (Probable). In late-stage paraherquamide biosynthesis, the third P450 monooxygenase, phqO, is probably responsible for the C-14 hydroxylation, transforming paraherquamide F to paraherquamide G, and paraherquamide E to the final product paraherquamide A (Probable). The expansion from the 6-membered ring pyran (in paraherquamides F and G) to the 7-membered dioxepin ring (in paraherquamides A and E) represents a poorly understood but intriguing process that probably involves the 2-oxoglutarate-dependent dioxygenase phqC (Probable). Finally, the remaining members of the paraherquamide cluster, including phqI as well as phqM (or phqH), do not have a clearly prescribed role and appear to be redundant (Probable).</text>
</comment>
<comment type="pathway">
    <text evidence="7">Alkaloid biosynthesis.</text>
</comment>
<comment type="similarity">
    <text evidence="6">Belongs to the tryptophan dimethylallyltransferase family.</text>
</comment>
<reference key="1">
    <citation type="journal article" date="2012" name="Med. Chem. Commun.">
        <title>Comparative analysis of the biosynthetic systems for fungal bicyclo[2.2.2]diazaoctane indole alkaloids: the (+)/(-)-notoamide, paraherquamide and malbrancheamide pathways.</title>
        <authorList>
            <person name="Li S."/>
            <person name="Anand K."/>
            <person name="Tran H."/>
            <person name="Yu F."/>
            <person name="Finefield J.M."/>
            <person name="Sunderhaus J.D."/>
            <person name="McAfoos T.J."/>
            <person name="Tsukamoto S."/>
            <person name="Williams R.M."/>
            <person name="Sherman D.H."/>
        </authorList>
    </citation>
    <scope>NUCLEOTIDE SEQUENCE [GENOMIC DNA]</scope>
    <scope>FUNCTION</scope>
    <scope>PATHWAY</scope>
    <source>
        <strain>ATCC 20841 / MF5123</strain>
    </source>
</reference>
<reference key="2">
    <citation type="journal article" date="2019" name="Nat. Chem.">
        <title>Fungal indole alkaloid biogenesis through evolution of a bifunctional reductase/Diels-Alderase.</title>
        <authorList>
            <person name="Dan Q."/>
            <person name="Newmister S.A."/>
            <person name="Klas K.R."/>
            <person name="Fraley A.E."/>
            <person name="McAfoos T.J."/>
            <person name="Somoza A.D."/>
            <person name="Sunderhaus J.D."/>
            <person name="Ye Y."/>
            <person name="Shende V.V."/>
            <person name="Yu F."/>
            <person name="Sanders J.N."/>
            <person name="Brown W.C."/>
            <person name="Zhao L."/>
            <person name="Paton R.S."/>
            <person name="Houk K.N."/>
            <person name="Smith J.L."/>
            <person name="Sherman D.H."/>
            <person name="Williams R.M."/>
        </authorList>
    </citation>
    <scope>FUNCTION</scope>
</reference>
<dbReference type="EC" id="2.5.1.-" evidence="7"/>
<dbReference type="EMBL" id="JQ708195">
    <property type="protein sequence ID" value="AGA37277.1"/>
    <property type="molecule type" value="Genomic_DNA"/>
</dbReference>
<dbReference type="SMR" id="L0E301"/>
<dbReference type="GO" id="GO:0004659">
    <property type="term" value="F:prenyltransferase activity"/>
    <property type="evidence" value="ECO:0007669"/>
    <property type="project" value="UniProtKB-KW"/>
</dbReference>
<dbReference type="GO" id="GO:0009820">
    <property type="term" value="P:alkaloid metabolic process"/>
    <property type="evidence" value="ECO:0007669"/>
    <property type="project" value="UniProtKB-KW"/>
</dbReference>
<dbReference type="CDD" id="cd13929">
    <property type="entry name" value="PT-DMATS_CymD"/>
    <property type="match status" value="1"/>
</dbReference>
<dbReference type="InterPro" id="IPR033964">
    <property type="entry name" value="Aro_prenylTrfase"/>
</dbReference>
<dbReference type="InterPro" id="IPR017795">
    <property type="entry name" value="Aro_prenylTrfase_DMATS"/>
</dbReference>
<dbReference type="InterPro" id="IPR012148">
    <property type="entry name" value="DMATS-type_fun"/>
</dbReference>
<dbReference type="NCBIfam" id="TIGR03429">
    <property type="entry name" value="arom_pren_DMATS"/>
    <property type="match status" value="1"/>
</dbReference>
<dbReference type="PANTHER" id="PTHR40627">
    <property type="entry name" value="INDOLE PRENYLTRANSFERASE TDIB-RELATED"/>
    <property type="match status" value="1"/>
</dbReference>
<dbReference type="PANTHER" id="PTHR40627:SF3">
    <property type="entry name" value="PRENYLTRANSFERASE ASQH2-RELATED"/>
    <property type="match status" value="1"/>
</dbReference>
<dbReference type="Pfam" id="PF11991">
    <property type="entry name" value="Trp_DMAT"/>
    <property type="match status" value="1"/>
</dbReference>
<dbReference type="PIRSF" id="PIRSF000509">
    <property type="entry name" value="Trp_DMAT"/>
    <property type="match status" value="1"/>
</dbReference>
<dbReference type="SFLD" id="SFLDS00036">
    <property type="entry name" value="Aromatic_Prenyltransferase"/>
    <property type="match status" value="1"/>
</dbReference>
<accession>L0E301</accession>
<proteinExistence type="inferred from homology"/>
<sequence>MTVSTESNFPHGASTQKPQSAEPEIYSSLTKSLDFSNDAEEKWWTRTAPLLSRILDSAGYTLPQQCQFLTLFNTLMIPNFGPHPHIWHSSITHSGLPVEFSVNYQPGKQPTVRIGFEPASSISGTARDPYNMVTVLNVLNKMSRLNFKGFDPSLFHTLISSLALSKNESDLLQGAKLEGSKFKTQAAFGLDLKGDAVTVKTYLYPALKCKVSGLAFSELLEAALAKHQNAHDFSRVLPLVQSYMEEGQCYNQYSFVGFDCVDSSKSRLKIYGALLDISWKKVEEVWTLGARLVNSETNKEGLRYMRALWEYLTPGKERRPVGIWNYELLPGSEEPMPKFYVDMNGENDFQNALGITKFLHHIGLTTTAEGLISKIQEYLYGVPHYPLSQTHVLFANQGPMQPRCEP</sequence>
<keyword id="KW-0017">Alkaloid metabolism</keyword>
<keyword id="KW-0637">Prenyltransferase</keyword>
<keyword id="KW-0808">Transferase</keyword>
<name>PHQJ_PENFE</name>
<protein>
    <recommendedName>
        <fullName evidence="5">Prenyltransferase phqJ</fullName>
        <ecNumber evidence="7">2.5.1.-</ecNumber>
    </recommendedName>
    <alternativeName>
        <fullName evidence="5">Paraherquamide biosynthesis cluster protein J</fullName>
    </alternativeName>
</protein>